<name>IDI2_STAA9</name>
<gene>
    <name evidence="1" type="primary">fni</name>
    <name type="ordered locus">SaurJH9_2370</name>
</gene>
<protein>
    <recommendedName>
        <fullName evidence="1">Isopentenyl-diphosphate delta-isomerase</fullName>
        <shortName evidence="1">IPP isomerase</shortName>
        <ecNumber evidence="1">5.3.3.2</ecNumber>
    </recommendedName>
    <alternativeName>
        <fullName evidence="1">Isopentenyl diphosphate:dimethylallyl diphosphate isomerase</fullName>
    </alternativeName>
    <alternativeName>
        <fullName evidence="1">Isopentenyl pyrophosphate isomerase</fullName>
    </alternativeName>
    <alternativeName>
        <fullName evidence="1">Type 2 isopentenyl diphosphate isomerase</fullName>
        <shortName evidence="1">IDI-2</shortName>
    </alternativeName>
</protein>
<evidence type="ECO:0000255" key="1">
    <source>
        <dbReference type="HAMAP-Rule" id="MF_00354"/>
    </source>
</evidence>
<proteinExistence type="inferred from homology"/>
<feature type="chain" id="PRO_1000079384" description="Isopentenyl-diphosphate delta-isomerase">
    <location>
        <begin position="1"/>
        <end position="349"/>
    </location>
</feature>
<feature type="binding site" evidence="1">
    <location>
        <begin position="9"/>
        <end position="10"/>
    </location>
    <ligand>
        <name>substrate</name>
    </ligand>
</feature>
<feature type="binding site" evidence="1">
    <location>
        <begin position="65"/>
        <end position="67"/>
    </location>
    <ligand>
        <name>FMN</name>
        <dbReference type="ChEBI" id="CHEBI:58210"/>
    </ligand>
</feature>
<feature type="binding site" evidence="1">
    <location>
        <begin position="95"/>
        <end position="97"/>
    </location>
    <ligand>
        <name>substrate</name>
    </ligand>
</feature>
<feature type="binding site" evidence="1">
    <location>
        <position position="95"/>
    </location>
    <ligand>
        <name>FMN</name>
        <dbReference type="ChEBI" id="CHEBI:58210"/>
    </ligand>
</feature>
<feature type="binding site" evidence="1">
    <location>
        <position position="124"/>
    </location>
    <ligand>
        <name>FMN</name>
        <dbReference type="ChEBI" id="CHEBI:58210"/>
    </ligand>
</feature>
<feature type="binding site" evidence="1">
    <location>
        <position position="154"/>
    </location>
    <ligand>
        <name>substrate</name>
    </ligand>
</feature>
<feature type="binding site" evidence="1">
    <location>
        <position position="155"/>
    </location>
    <ligand>
        <name>Mg(2+)</name>
        <dbReference type="ChEBI" id="CHEBI:18420"/>
    </ligand>
</feature>
<feature type="binding site" evidence="1">
    <location>
        <position position="186"/>
    </location>
    <ligand>
        <name>FMN</name>
        <dbReference type="ChEBI" id="CHEBI:58210"/>
    </ligand>
</feature>
<feature type="binding site" evidence="1">
    <location>
        <position position="211"/>
    </location>
    <ligand>
        <name>FMN</name>
        <dbReference type="ChEBI" id="CHEBI:58210"/>
    </ligand>
</feature>
<feature type="binding site" evidence="1">
    <location>
        <position position="216"/>
    </location>
    <ligand>
        <name>FMN</name>
        <dbReference type="ChEBI" id="CHEBI:58210"/>
    </ligand>
</feature>
<feature type="binding site" evidence="1">
    <location>
        <begin position="262"/>
        <end position="264"/>
    </location>
    <ligand>
        <name>FMN</name>
        <dbReference type="ChEBI" id="CHEBI:58210"/>
    </ligand>
</feature>
<feature type="binding site" evidence="1">
    <location>
        <begin position="283"/>
        <end position="284"/>
    </location>
    <ligand>
        <name>FMN</name>
        <dbReference type="ChEBI" id="CHEBI:58210"/>
    </ligand>
</feature>
<comment type="function">
    <text evidence="1">Involved in the biosynthesis of isoprenoids. Catalyzes the 1,3-allylic rearrangement of the homoallylic substrate isopentenyl (IPP) to its allylic isomer, dimethylallyl diphosphate (DMAPP).</text>
</comment>
<comment type="catalytic activity">
    <reaction evidence="1">
        <text>isopentenyl diphosphate = dimethylallyl diphosphate</text>
        <dbReference type="Rhea" id="RHEA:23284"/>
        <dbReference type="ChEBI" id="CHEBI:57623"/>
        <dbReference type="ChEBI" id="CHEBI:128769"/>
        <dbReference type="EC" id="5.3.3.2"/>
    </reaction>
</comment>
<comment type="cofactor">
    <cofactor evidence="1">
        <name>FMN</name>
        <dbReference type="ChEBI" id="CHEBI:58210"/>
    </cofactor>
</comment>
<comment type="cofactor">
    <cofactor evidence="1">
        <name>NADPH</name>
        <dbReference type="ChEBI" id="CHEBI:57783"/>
    </cofactor>
</comment>
<comment type="cofactor">
    <cofactor evidence="1">
        <name>Mg(2+)</name>
        <dbReference type="ChEBI" id="CHEBI:18420"/>
    </cofactor>
</comment>
<comment type="subunit">
    <text evidence="1">Homooctamer. Dimer of tetramers.</text>
</comment>
<comment type="subcellular location">
    <subcellularLocation>
        <location evidence="1">Cytoplasm</location>
    </subcellularLocation>
</comment>
<comment type="similarity">
    <text evidence="1">Belongs to the IPP isomerase type 2 family.</text>
</comment>
<accession>A5IVC7</accession>
<keyword id="KW-0963">Cytoplasm</keyword>
<keyword id="KW-0285">Flavoprotein</keyword>
<keyword id="KW-0288">FMN</keyword>
<keyword id="KW-0413">Isomerase</keyword>
<keyword id="KW-0414">Isoprene biosynthesis</keyword>
<keyword id="KW-0460">Magnesium</keyword>
<keyword id="KW-0479">Metal-binding</keyword>
<keyword id="KW-0521">NADP</keyword>
<organism>
    <name type="scientific">Staphylococcus aureus (strain JH9)</name>
    <dbReference type="NCBI Taxonomy" id="359786"/>
    <lineage>
        <taxon>Bacteria</taxon>
        <taxon>Bacillati</taxon>
        <taxon>Bacillota</taxon>
        <taxon>Bacilli</taxon>
        <taxon>Bacillales</taxon>
        <taxon>Staphylococcaceae</taxon>
        <taxon>Staphylococcus</taxon>
    </lineage>
</organism>
<reference key="1">
    <citation type="submission" date="2007-05" db="EMBL/GenBank/DDBJ databases">
        <title>Complete sequence of chromosome of Staphylococcus aureus subsp. aureus JH9.</title>
        <authorList>
            <consortium name="US DOE Joint Genome Institute"/>
            <person name="Copeland A."/>
            <person name="Lucas S."/>
            <person name="Lapidus A."/>
            <person name="Barry K."/>
            <person name="Detter J.C."/>
            <person name="Glavina del Rio T."/>
            <person name="Hammon N."/>
            <person name="Israni S."/>
            <person name="Pitluck S."/>
            <person name="Chain P."/>
            <person name="Malfatti S."/>
            <person name="Shin M."/>
            <person name="Vergez L."/>
            <person name="Schmutz J."/>
            <person name="Larimer F."/>
            <person name="Land M."/>
            <person name="Hauser L."/>
            <person name="Kyrpides N."/>
            <person name="Kim E."/>
            <person name="Tomasz A."/>
            <person name="Richardson P."/>
        </authorList>
    </citation>
    <scope>NUCLEOTIDE SEQUENCE [LARGE SCALE GENOMIC DNA]</scope>
    <source>
        <strain>JH9</strain>
    </source>
</reference>
<dbReference type="EC" id="5.3.3.2" evidence="1"/>
<dbReference type="EMBL" id="CP000703">
    <property type="protein sequence ID" value="ABQ50150.1"/>
    <property type="molecule type" value="Genomic_DNA"/>
</dbReference>
<dbReference type="RefSeq" id="WP_001279374.1">
    <property type="nucleotide sequence ID" value="NC_009487.1"/>
</dbReference>
<dbReference type="SMR" id="A5IVC7"/>
<dbReference type="KEGG" id="saj:SaurJH9_2370"/>
<dbReference type="HOGENOM" id="CLU_065515_0_0_9"/>
<dbReference type="GO" id="GO:0005737">
    <property type="term" value="C:cytoplasm"/>
    <property type="evidence" value="ECO:0007669"/>
    <property type="project" value="UniProtKB-SubCell"/>
</dbReference>
<dbReference type="GO" id="GO:0010181">
    <property type="term" value="F:FMN binding"/>
    <property type="evidence" value="ECO:0007669"/>
    <property type="project" value="UniProtKB-UniRule"/>
</dbReference>
<dbReference type="GO" id="GO:0004452">
    <property type="term" value="F:isopentenyl-diphosphate delta-isomerase activity"/>
    <property type="evidence" value="ECO:0007669"/>
    <property type="project" value="UniProtKB-UniRule"/>
</dbReference>
<dbReference type="GO" id="GO:0000287">
    <property type="term" value="F:magnesium ion binding"/>
    <property type="evidence" value="ECO:0007669"/>
    <property type="project" value="UniProtKB-UniRule"/>
</dbReference>
<dbReference type="GO" id="GO:0070402">
    <property type="term" value="F:NADPH binding"/>
    <property type="evidence" value="ECO:0007669"/>
    <property type="project" value="UniProtKB-UniRule"/>
</dbReference>
<dbReference type="GO" id="GO:0016491">
    <property type="term" value="F:oxidoreductase activity"/>
    <property type="evidence" value="ECO:0007669"/>
    <property type="project" value="InterPro"/>
</dbReference>
<dbReference type="GO" id="GO:0008299">
    <property type="term" value="P:isoprenoid biosynthetic process"/>
    <property type="evidence" value="ECO:0007669"/>
    <property type="project" value="UniProtKB-UniRule"/>
</dbReference>
<dbReference type="CDD" id="cd02811">
    <property type="entry name" value="IDI-2_FMN"/>
    <property type="match status" value="1"/>
</dbReference>
<dbReference type="Gene3D" id="3.20.20.70">
    <property type="entry name" value="Aldolase class I"/>
    <property type="match status" value="1"/>
</dbReference>
<dbReference type="HAMAP" id="MF_00354">
    <property type="entry name" value="Idi_2"/>
    <property type="match status" value="1"/>
</dbReference>
<dbReference type="InterPro" id="IPR013785">
    <property type="entry name" value="Aldolase_TIM"/>
</dbReference>
<dbReference type="InterPro" id="IPR000262">
    <property type="entry name" value="FMN-dep_DH"/>
</dbReference>
<dbReference type="InterPro" id="IPR011179">
    <property type="entry name" value="IPdP_isomerase"/>
</dbReference>
<dbReference type="NCBIfam" id="TIGR02151">
    <property type="entry name" value="IPP_isom_2"/>
    <property type="match status" value="1"/>
</dbReference>
<dbReference type="PANTHER" id="PTHR43665">
    <property type="entry name" value="ISOPENTENYL-DIPHOSPHATE DELTA-ISOMERASE"/>
    <property type="match status" value="1"/>
</dbReference>
<dbReference type="PANTHER" id="PTHR43665:SF1">
    <property type="entry name" value="ISOPENTENYL-DIPHOSPHATE DELTA-ISOMERASE"/>
    <property type="match status" value="1"/>
</dbReference>
<dbReference type="Pfam" id="PF01070">
    <property type="entry name" value="FMN_dh"/>
    <property type="match status" value="1"/>
</dbReference>
<dbReference type="PIRSF" id="PIRSF003314">
    <property type="entry name" value="IPP_isomerase"/>
    <property type="match status" value="1"/>
</dbReference>
<dbReference type="SUPFAM" id="SSF51395">
    <property type="entry name" value="FMN-linked oxidoreductases"/>
    <property type="match status" value="1"/>
</dbReference>
<sequence>MSDFQREQRKNEHVEIAMAQSDAMHSDFDKMRFVHHSIPSINVNDIDLTSQTPDLTMAYPIYINAMTGGSEWTKNINEKLAVVARETGLAMAVGSTHAALRNPRMAETFTIARKMNPEGMIFSNVGADVPVEKALEAVELLEAQALQIHVNSPQELVMPEGNREFVTWLDNIASIVSRVSVPVIIKEVGFGMSKELMHDLQQIGVKYVDVSGKGGTNFVDIENERRANKDMDYLSSWGQSTVESLLETTAYQSEISVFASGGLRTPLDAIKSLALGAKATGMSRPFLNQVENNGIAHTVAYVESFIEHMKSIMTMLDAKNIDDLTQKQIVFSPEIMSWIEQRSLNIHRG</sequence>